<sequence>MVELRQFSDLPIALSGISRIADPSPPPPVVAIRRRFKGGGNTRRIVFSVPLIFAFPFPTGTPKDVLVGIAAVFDGHSGSEASEMASQLLLDYFALHIYFLLDATFSKELTGKLPNSLMHLYDLDSQRFQDSLPLNFHLDILKEALLRAIYDIDATFTKEASTRKLDSGSTATIALIADGQLLVASIGDSKALLCSERYETPEEAKATLIKLYRERKRNQDSSPSRFSDLKLEHRTGLMRFIAKELTKDHHPDREDEMLRVKAAGGYVTKWAGVPRVNGQLAVSRSIGDLTYRSYGVISAPEVMDWQPLVANDSYLVVSSDGIFEKLEVQDACDRLWEVKNQTSFGAGVPSYCSISLADCLVNTAFEKGSMDNMAAVVVPLKSNLDWESQPKEQSVGPSGFKMKNTYALPCEFLSSQPNLFRMG</sequence>
<reference key="1">
    <citation type="journal article" date="2000" name="Nature">
        <title>Sequence and analysis of chromosome 3 of the plant Arabidopsis thaliana.</title>
        <authorList>
            <person name="Salanoubat M."/>
            <person name="Lemcke K."/>
            <person name="Rieger M."/>
            <person name="Ansorge W."/>
            <person name="Unseld M."/>
            <person name="Fartmann B."/>
            <person name="Valle G."/>
            <person name="Bloecker H."/>
            <person name="Perez-Alonso M."/>
            <person name="Obermaier B."/>
            <person name="Delseny M."/>
            <person name="Boutry M."/>
            <person name="Grivell L.A."/>
            <person name="Mache R."/>
            <person name="Puigdomenech P."/>
            <person name="De Simone V."/>
            <person name="Choisne N."/>
            <person name="Artiguenave F."/>
            <person name="Robert C."/>
            <person name="Brottier P."/>
            <person name="Wincker P."/>
            <person name="Cattolico L."/>
            <person name="Weissenbach J."/>
            <person name="Saurin W."/>
            <person name="Quetier F."/>
            <person name="Schaefer M."/>
            <person name="Mueller-Auer S."/>
            <person name="Gabel C."/>
            <person name="Fuchs M."/>
            <person name="Benes V."/>
            <person name="Wurmbach E."/>
            <person name="Drzonek H."/>
            <person name="Erfle H."/>
            <person name="Jordan N."/>
            <person name="Bangert S."/>
            <person name="Wiedelmann R."/>
            <person name="Kranz H."/>
            <person name="Voss H."/>
            <person name="Holland R."/>
            <person name="Brandt P."/>
            <person name="Nyakatura G."/>
            <person name="Vezzi A."/>
            <person name="D'Angelo M."/>
            <person name="Pallavicini A."/>
            <person name="Toppo S."/>
            <person name="Simionati B."/>
            <person name="Conrad A."/>
            <person name="Hornischer K."/>
            <person name="Kauer G."/>
            <person name="Loehnert T.-H."/>
            <person name="Nordsiek G."/>
            <person name="Reichelt J."/>
            <person name="Scharfe M."/>
            <person name="Schoen O."/>
            <person name="Bargues M."/>
            <person name="Terol J."/>
            <person name="Climent J."/>
            <person name="Navarro P."/>
            <person name="Collado C."/>
            <person name="Perez-Perez A."/>
            <person name="Ottenwaelder B."/>
            <person name="Duchemin D."/>
            <person name="Cooke R."/>
            <person name="Laudie M."/>
            <person name="Berger-Llauro C."/>
            <person name="Purnelle B."/>
            <person name="Masuy D."/>
            <person name="de Haan M."/>
            <person name="Maarse A.C."/>
            <person name="Alcaraz J.-P."/>
            <person name="Cottet A."/>
            <person name="Casacuberta E."/>
            <person name="Monfort A."/>
            <person name="Argiriou A."/>
            <person name="Flores M."/>
            <person name="Liguori R."/>
            <person name="Vitale D."/>
            <person name="Mannhaupt G."/>
            <person name="Haase D."/>
            <person name="Schoof H."/>
            <person name="Rudd S."/>
            <person name="Zaccaria P."/>
            <person name="Mewes H.-W."/>
            <person name="Mayer K.F.X."/>
            <person name="Kaul S."/>
            <person name="Town C.D."/>
            <person name="Koo H.L."/>
            <person name="Tallon L.J."/>
            <person name="Jenkins J."/>
            <person name="Rooney T."/>
            <person name="Rizzo M."/>
            <person name="Walts A."/>
            <person name="Utterback T."/>
            <person name="Fujii C.Y."/>
            <person name="Shea T.P."/>
            <person name="Creasy T.H."/>
            <person name="Haas B."/>
            <person name="Maiti R."/>
            <person name="Wu D."/>
            <person name="Peterson J."/>
            <person name="Van Aken S."/>
            <person name="Pai G."/>
            <person name="Militscher J."/>
            <person name="Sellers P."/>
            <person name="Gill J.E."/>
            <person name="Feldblyum T.V."/>
            <person name="Preuss D."/>
            <person name="Lin X."/>
            <person name="Nierman W.C."/>
            <person name="Salzberg S.L."/>
            <person name="White O."/>
            <person name="Venter J.C."/>
            <person name="Fraser C.M."/>
            <person name="Kaneko T."/>
            <person name="Nakamura Y."/>
            <person name="Sato S."/>
            <person name="Kato T."/>
            <person name="Asamizu E."/>
            <person name="Sasamoto S."/>
            <person name="Kimura T."/>
            <person name="Idesawa K."/>
            <person name="Kawashima K."/>
            <person name="Kishida Y."/>
            <person name="Kiyokawa C."/>
            <person name="Kohara M."/>
            <person name="Matsumoto M."/>
            <person name="Matsuno A."/>
            <person name="Muraki A."/>
            <person name="Nakayama S."/>
            <person name="Nakazaki N."/>
            <person name="Shinpo S."/>
            <person name="Takeuchi C."/>
            <person name="Wada T."/>
            <person name="Watanabe A."/>
            <person name="Yamada M."/>
            <person name="Yasuda M."/>
            <person name="Tabata S."/>
        </authorList>
    </citation>
    <scope>NUCLEOTIDE SEQUENCE [LARGE SCALE GENOMIC DNA]</scope>
    <source>
        <strain>cv. Columbia</strain>
    </source>
</reference>
<reference key="2">
    <citation type="journal article" date="2017" name="Plant J.">
        <title>Araport11: a complete reannotation of the Arabidopsis thaliana reference genome.</title>
        <authorList>
            <person name="Cheng C.Y."/>
            <person name="Krishnakumar V."/>
            <person name="Chan A.P."/>
            <person name="Thibaud-Nissen F."/>
            <person name="Schobel S."/>
            <person name="Town C.D."/>
        </authorList>
    </citation>
    <scope>GENOME REANNOTATION</scope>
    <source>
        <strain>cv. Columbia</strain>
    </source>
</reference>
<reference key="3">
    <citation type="journal article" date="2008" name="BMC Genomics">
        <title>Genome-wide and expression analysis of protein phosphatase 2C in rice and Arabidopsis.</title>
        <authorList>
            <person name="Xue T."/>
            <person name="Wang D."/>
            <person name="Zhang S."/>
            <person name="Ehlting J."/>
            <person name="Ni F."/>
            <person name="Jacab S."/>
            <person name="Zheng C."/>
            <person name="Zhong Y."/>
        </authorList>
    </citation>
    <scope>GENE FAMILY</scope>
    <scope>NOMENCLATURE</scope>
</reference>
<proteinExistence type="inferred from homology"/>
<dbReference type="EC" id="3.1.3.16"/>
<dbReference type="EMBL" id="AL138648">
    <property type="protein sequence ID" value="CAB86433.1"/>
    <property type="molecule type" value="Genomic_DNA"/>
</dbReference>
<dbReference type="EMBL" id="CP002686">
    <property type="protein sequence ID" value="AEE80467.1"/>
    <property type="molecule type" value="Genomic_DNA"/>
</dbReference>
<dbReference type="PIR" id="T48121">
    <property type="entry name" value="T48121"/>
</dbReference>
<dbReference type="RefSeq" id="NP_191891.1">
    <property type="nucleotide sequence ID" value="NM_116197.1"/>
</dbReference>
<dbReference type="SMR" id="Q9M1V8"/>
<dbReference type="FunCoup" id="Q9M1V8">
    <property type="interactions" value="8"/>
</dbReference>
<dbReference type="STRING" id="3702.Q9M1V8"/>
<dbReference type="PaxDb" id="3702-AT3G63320.1"/>
<dbReference type="ProteomicsDB" id="248802"/>
<dbReference type="EnsemblPlants" id="AT3G63320.1">
    <property type="protein sequence ID" value="AT3G63320.1"/>
    <property type="gene ID" value="AT3G63320"/>
</dbReference>
<dbReference type="GeneID" id="825507"/>
<dbReference type="Gramene" id="AT3G63320.1">
    <property type="protein sequence ID" value="AT3G63320.1"/>
    <property type="gene ID" value="AT3G63320"/>
</dbReference>
<dbReference type="KEGG" id="ath:AT3G63320"/>
<dbReference type="Araport" id="AT3G63320"/>
<dbReference type="TAIR" id="AT3G63320"/>
<dbReference type="eggNOG" id="KOG0698">
    <property type="taxonomic scope" value="Eukaryota"/>
</dbReference>
<dbReference type="HOGENOM" id="CLU_013173_0_2_1"/>
<dbReference type="InParanoid" id="Q9M1V8"/>
<dbReference type="PhylomeDB" id="Q9M1V8"/>
<dbReference type="PRO" id="PR:Q9M1V8"/>
<dbReference type="Proteomes" id="UP000006548">
    <property type="component" value="Chromosome 3"/>
</dbReference>
<dbReference type="ExpressionAtlas" id="Q9M1V8">
    <property type="expression patterns" value="baseline and differential"/>
</dbReference>
<dbReference type="GO" id="GO:0046872">
    <property type="term" value="F:metal ion binding"/>
    <property type="evidence" value="ECO:0007669"/>
    <property type="project" value="UniProtKB-KW"/>
</dbReference>
<dbReference type="GO" id="GO:0004722">
    <property type="term" value="F:protein serine/threonine phosphatase activity"/>
    <property type="evidence" value="ECO:0007669"/>
    <property type="project" value="UniProtKB-EC"/>
</dbReference>
<dbReference type="CDD" id="cd00143">
    <property type="entry name" value="PP2Cc"/>
    <property type="match status" value="1"/>
</dbReference>
<dbReference type="Gene3D" id="3.60.40.10">
    <property type="entry name" value="PPM-type phosphatase domain"/>
    <property type="match status" value="1"/>
</dbReference>
<dbReference type="InterPro" id="IPR015655">
    <property type="entry name" value="PP2C"/>
</dbReference>
<dbReference type="InterPro" id="IPR036457">
    <property type="entry name" value="PPM-type-like_dom_sf"/>
</dbReference>
<dbReference type="InterPro" id="IPR001932">
    <property type="entry name" value="PPM-type_phosphatase-like_dom"/>
</dbReference>
<dbReference type="PANTHER" id="PTHR47992">
    <property type="entry name" value="PROTEIN PHOSPHATASE"/>
    <property type="match status" value="1"/>
</dbReference>
<dbReference type="Pfam" id="PF00481">
    <property type="entry name" value="PP2C"/>
    <property type="match status" value="2"/>
</dbReference>
<dbReference type="SMART" id="SM00332">
    <property type="entry name" value="PP2Cc"/>
    <property type="match status" value="1"/>
</dbReference>
<dbReference type="SUPFAM" id="SSF81606">
    <property type="entry name" value="PP2C-like"/>
    <property type="match status" value="1"/>
</dbReference>
<dbReference type="PROSITE" id="PS51746">
    <property type="entry name" value="PPM_2"/>
    <property type="match status" value="1"/>
</dbReference>
<keyword id="KW-0378">Hydrolase</keyword>
<keyword id="KW-0460">Magnesium</keyword>
<keyword id="KW-0464">Manganese</keyword>
<keyword id="KW-0479">Metal-binding</keyword>
<keyword id="KW-0904">Protein phosphatase</keyword>
<keyword id="KW-1185">Reference proteome</keyword>
<evidence type="ECO:0000250" key="1"/>
<evidence type="ECO:0000255" key="2">
    <source>
        <dbReference type="PROSITE-ProRule" id="PRU01082"/>
    </source>
</evidence>
<evidence type="ECO:0000305" key="3"/>
<comment type="catalytic activity">
    <reaction>
        <text>O-phospho-L-seryl-[protein] + H2O = L-seryl-[protein] + phosphate</text>
        <dbReference type="Rhea" id="RHEA:20629"/>
        <dbReference type="Rhea" id="RHEA-COMP:9863"/>
        <dbReference type="Rhea" id="RHEA-COMP:11604"/>
        <dbReference type="ChEBI" id="CHEBI:15377"/>
        <dbReference type="ChEBI" id="CHEBI:29999"/>
        <dbReference type="ChEBI" id="CHEBI:43474"/>
        <dbReference type="ChEBI" id="CHEBI:83421"/>
        <dbReference type="EC" id="3.1.3.16"/>
    </reaction>
</comment>
<comment type="catalytic activity">
    <reaction>
        <text>O-phospho-L-threonyl-[protein] + H2O = L-threonyl-[protein] + phosphate</text>
        <dbReference type="Rhea" id="RHEA:47004"/>
        <dbReference type="Rhea" id="RHEA-COMP:11060"/>
        <dbReference type="Rhea" id="RHEA-COMP:11605"/>
        <dbReference type="ChEBI" id="CHEBI:15377"/>
        <dbReference type="ChEBI" id="CHEBI:30013"/>
        <dbReference type="ChEBI" id="CHEBI:43474"/>
        <dbReference type="ChEBI" id="CHEBI:61977"/>
        <dbReference type="EC" id="3.1.3.16"/>
    </reaction>
</comment>
<comment type="cofactor">
    <cofactor evidence="1">
        <name>Mg(2+)</name>
        <dbReference type="ChEBI" id="CHEBI:18420"/>
    </cofactor>
    <cofactor evidence="1">
        <name>Mn(2+)</name>
        <dbReference type="ChEBI" id="CHEBI:29035"/>
    </cofactor>
    <text evidence="1">Binds 2 magnesium or manganese ions per subunit.</text>
</comment>
<comment type="similarity">
    <text evidence="3">Belongs to the PP2C family.</text>
</comment>
<gene>
    <name type="ordered locus">At3g63320</name>
    <name type="ORF">F16M2.170</name>
    <name type="ORF">MAA21.1</name>
</gene>
<feature type="chain" id="PRO_0000367974" description="Putative protein phosphatase 2C 50">
    <location>
        <begin position="1"/>
        <end position="423"/>
    </location>
</feature>
<feature type="domain" description="PPM-type phosphatase" evidence="2">
    <location>
        <begin position="52"/>
        <end position="380"/>
    </location>
</feature>
<feature type="binding site" evidence="1">
    <location>
        <position position="74"/>
    </location>
    <ligand>
        <name>Mn(2+)</name>
        <dbReference type="ChEBI" id="CHEBI:29035"/>
        <label>1</label>
    </ligand>
</feature>
<feature type="binding site" evidence="1">
    <location>
        <position position="74"/>
    </location>
    <ligand>
        <name>Mn(2+)</name>
        <dbReference type="ChEBI" id="CHEBI:29035"/>
        <label>2</label>
    </ligand>
</feature>
<feature type="binding site" evidence="1">
    <location>
        <position position="75"/>
    </location>
    <ligand>
        <name>Mn(2+)</name>
        <dbReference type="ChEBI" id="CHEBI:29035"/>
        <label>1</label>
    </ligand>
</feature>
<feature type="binding site" evidence="1">
    <location>
        <position position="320"/>
    </location>
    <ligand>
        <name>Mn(2+)</name>
        <dbReference type="ChEBI" id="CHEBI:29035"/>
        <label>2</label>
    </ligand>
</feature>
<feature type="binding site" evidence="1">
    <location>
        <position position="371"/>
    </location>
    <ligand>
        <name>Mn(2+)</name>
        <dbReference type="ChEBI" id="CHEBI:29035"/>
        <label>2</label>
    </ligand>
</feature>
<accession>Q9M1V8</accession>
<name>P2C50_ARATH</name>
<organism>
    <name type="scientific">Arabidopsis thaliana</name>
    <name type="common">Mouse-ear cress</name>
    <dbReference type="NCBI Taxonomy" id="3702"/>
    <lineage>
        <taxon>Eukaryota</taxon>
        <taxon>Viridiplantae</taxon>
        <taxon>Streptophyta</taxon>
        <taxon>Embryophyta</taxon>
        <taxon>Tracheophyta</taxon>
        <taxon>Spermatophyta</taxon>
        <taxon>Magnoliopsida</taxon>
        <taxon>eudicotyledons</taxon>
        <taxon>Gunneridae</taxon>
        <taxon>Pentapetalae</taxon>
        <taxon>rosids</taxon>
        <taxon>malvids</taxon>
        <taxon>Brassicales</taxon>
        <taxon>Brassicaceae</taxon>
        <taxon>Camelineae</taxon>
        <taxon>Arabidopsis</taxon>
    </lineage>
</organism>
<protein>
    <recommendedName>
        <fullName>Putative protein phosphatase 2C 50</fullName>
        <shortName>AtPP2C50</shortName>
        <ecNumber>3.1.3.16</ecNumber>
    </recommendedName>
</protein>